<gene>
    <name evidence="1" type="primary">rep</name>
    <name type="ordered locus">BU598</name>
</gene>
<accession>P57654</accession>
<protein>
    <recommendedName>
        <fullName evidence="1">ATP-dependent DNA helicase Rep</fullName>
        <ecNumber evidence="1">5.6.2.4</ecNumber>
    </recommendedName>
    <alternativeName>
        <fullName evidence="1">DNA 3'-5' helicase Rep</fullName>
    </alternativeName>
</protein>
<keyword id="KW-0067">ATP-binding</keyword>
<keyword id="KW-0235">DNA replication</keyword>
<keyword id="KW-0238">DNA-binding</keyword>
<keyword id="KW-0347">Helicase</keyword>
<keyword id="KW-0378">Hydrolase</keyword>
<keyword id="KW-0413">Isomerase</keyword>
<keyword id="KW-0547">Nucleotide-binding</keyword>
<keyword id="KW-1185">Reference proteome</keyword>
<proteinExistence type="inferred from homology"/>
<feature type="chain" id="PRO_0000102065" description="ATP-dependent DNA helicase Rep">
    <location>
        <begin position="1"/>
        <end position="645"/>
    </location>
</feature>
<feature type="domain" description="UvrD-like helicase ATP-binding" evidence="1">
    <location>
        <begin position="1"/>
        <end position="280"/>
    </location>
</feature>
<feature type="domain" description="UvrD-like helicase C-terminal" evidence="1">
    <location>
        <begin position="281"/>
        <end position="562"/>
    </location>
</feature>
<feature type="binding site" evidence="1">
    <location>
        <begin position="22"/>
        <end position="29"/>
    </location>
    <ligand>
        <name>ATP</name>
        <dbReference type="ChEBI" id="CHEBI:30616"/>
    </ligand>
</feature>
<feature type="binding site" evidence="1">
    <location>
        <position position="278"/>
    </location>
    <ligand>
        <name>ATP</name>
        <dbReference type="ChEBI" id="CHEBI:30616"/>
    </ligand>
</feature>
<organism>
    <name type="scientific">Buchnera aphidicola subsp. Acyrthosiphon pisum (strain APS)</name>
    <name type="common">Acyrthosiphon pisum symbiotic bacterium</name>
    <dbReference type="NCBI Taxonomy" id="107806"/>
    <lineage>
        <taxon>Bacteria</taxon>
        <taxon>Pseudomonadati</taxon>
        <taxon>Pseudomonadota</taxon>
        <taxon>Gammaproteobacteria</taxon>
        <taxon>Enterobacterales</taxon>
        <taxon>Erwiniaceae</taxon>
        <taxon>Buchnera</taxon>
    </lineage>
</organism>
<evidence type="ECO:0000255" key="1">
    <source>
        <dbReference type="HAMAP-Rule" id="MF_01920"/>
    </source>
</evidence>
<name>REP_BUCAI</name>
<dbReference type="EC" id="5.6.2.4" evidence="1"/>
<dbReference type="EMBL" id="BA000003">
    <property type="protein sequence ID" value="BAB13283.1"/>
    <property type="molecule type" value="Genomic_DNA"/>
</dbReference>
<dbReference type="RefSeq" id="NP_240397.1">
    <property type="nucleotide sequence ID" value="NC_002528.1"/>
</dbReference>
<dbReference type="RefSeq" id="WP_009874546.1">
    <property type="nucleotide sequence ID" value="NZ_AP036055.1"/>
</dbReference>
<dbReference type="SMR" id="P57654"/>
<dbReference type="STRING" id="563178.BUAP5A_590"/>
<dbReference type="EnsemblBacteria" id="BAB13283">
    <property type="protein sequence ID" value="BAB13283"/>
    <property type="gene ID" value="BAB13283"/>
</dbReference>
<dbReference type="KEGG" id="buc:BU598"/>
<dbReference type="PATRIC" id="fig|107806.10.peg.601"/>
<dbReference type="eggNOG" id="COG0210">
    <property type="taxonomic scope" value="Bacteria"/>
</dbReference>
<dbReference type="HOGENOM" id="CLU_004585_5_2_6"/>
<dbReference type="Proteomes" id="UP000001806">
    <property type="component" value="Chromosome"/>
</dbReference>
<dbReference type="GO" id="GO:0005829">
    <property type="term" value="C:cytosol"/>
    <property type="evidence" value="ECO:0007669"/>
    <property type="project" value="TreeGrafter"/>
</dbReference>
<dbReference type="GO" id="GO:0043138">
    <property type="term" value="F:3'-5' DNA helicase activity"/>
    <property type="evidence" value="ECO:0007669"/>
    <property type="project" value="UniProtKB-UniRule"/>
</dbReference>
<dbReference type="GO" id="GO:0005524">
    <property type="term" value="F:ATP binding"/>
    <property type="evidence" value="ECO:0007669"/>
    <property type="project" value="UniProtKB-UniRule"/>
</dbReference>
<dbReference type="GO" id="GO:0016887">
    <property type="term" value="F:ATP hydrolysis activity"/>
    <property type="evidence" value="ECO:0007669"/>
    <property type="project" value="RHEA"/>
</dbReference>
<dbReference type="GO" id="GO:0003697">
    <property type="term" value="F:single-stranded DNA binding"/>
    <property type="evidence" value="ECO:0007669"/>
    <property type="project" value="UniProtKB-UniRule"/>
</dbReference>
<dbReference type="GO" id="GO:0006260">
    <property type="term" value="P:DNA replication"/>
    <property type="evidence" value="ECO:0007669"/>
    <property type="project" value="UniProtKB-KW"/>
</dbReference>
<dbReference type="GO" id="GO:0000725">
    <property type="term" value="P:recombinational repair"/>
    <property type="evidence" value="ECO:0007669"/>
    <property type="project" value="TreeGrafter"/>
</dbReference>
<dbReference type="CDD" id="cd17932">
    <property type="entry name" value="DEXQc_UvrD"/>
    <property type="match status" value="1"/>
</dbReference>
<dbReference type="CDD" id="cd18807">
    <property type="entry name" value="SF1_C_UvrD"/>
    <property type="match status" value="1"/>
</dbReference>
<dbReference type="Gene3D" id="1.10.10.160">
    <property type="match status" value="1"/>
</dbReference>
<dbReference type="Gene3D" id="3.40.50.300">
    <property type="entry name" value="P-loop containing nucleotide triphosphate hydrolases"/>
    <property type="match status" value="2"/>
</dbReference>
<dbReference type="Gene3D" id="1.10.486.10">
    <property type="entry name" value="PCRA, domain 4"/>
    <property type="match status" value="1"/>
</dbReference>
<dbReference type="HAMAP" id="MF_01920">
    <property type="entry name" value="Helicase_Rep"/>
    <property type="match status" value="1"/>
</dbReference>
<dbReference type="InterPro" id="IPR013986">
    <property type="entry name" value="DExx_box_DNA_helicase_dom_sf"/>
</dbReference>
<dbReference type="InterPro" id="IPR014017">
    <property type="entry name" value="DNA_helicase_UvrD-like_C"/>
</dbReference>
<dbReference type="InterPro" id="IPR000212">
    <property type="entry name" value="DNA_helicase_UvrD/REP"/>
</dbReference>
<dbReference type="InterPro" id="IPR005752">
    <property type="entry name" value="Helicase_Rep"/>
</dbReference>
<dbReference type="InterPro" id="IPR027417">
    <property type="entry name" value="P-loop_NTPase"/>
</dbReference>
<dbReference type="InterPro" id="IPR014016">
    <property type="entry name" value="UvrD-like_ATP-bd"/>
</dbReference>
<dbReference type="NCBIfam" id="TIGR01074">
    <property type="entry name" value="rep"/>
    <property type="match status" value="1"/>
</dbReference>
<dbReference type="PANTHER" id="PTHR11070:SF64">
    <property type="entry name" value="ATP-DEPENDENT DNA HELICASE REP"/>
    <property type="match status" value="1"/>
</dbReference>
<dbReference type="PANTHER" id="PTHR11070">
    <property type="entry name" value="UVRD / RECB / PCRA DNA HELICASE FAMILY MEMBER"/>
    <property type="match status" value="1"/>
</dbReference>
<dbReference type="Pfam" id="PF00580">
    <property type="entry name" value="UvrD-helicase"/>
    <property type="match status" value="1"/>
</dbReference>
<dbReference type="Pfam" id="PF13361">
    <property type="entry name" value="UvrD_C"/>
    <property type="match status" value="1"/>
</dbReference>
<dbReference type="SUPFAM" id="SSF52540">
    <property type="entry name" value="P-loop containing nucleoside triphosphate hydrolases"/>
    <property type="match status" value="1"/>
</dbReference>
<dbReference type="PROSITE" id="PS51198">
    <property type="entry name" value="UVRD_HELICASE_ATP_BIND"/>
    <property type="match status" value="1"/>
</dbReference>
<dbReference type="PROSITE" id="PS51217">
    <property type="entry name" value="UVRD_HELICASE_CTER"/>
    <property type="match status" value="1"/>
</dbReference>
<comment type="function">
    <text evidence="1">Rep helicase is a single-stranded DNA-dependent ATPase involved in DNA replication; it can initiate unwinding at a nick in the DNA. It binds to the single-stranded DNA and acts in a progressive fashion along the DNA in the 3' to 5' direction.</text>
</comment>
<comment type="catalytic activity">
    <reaction evidence="1">
        <text>Couples ATP hydrolysis with the unwinding of duplex DNA by translocating in the 3'-5' direction.</text>
        <dbReference type="EC" id="5.6.2.4"/>
    </reaction>
</comment>
<comment type="catalytic activity">
    <reaction evidence="1">
        <text>ATP + H2O = ADP + phosphate + H(+)</text>
        <dbReference type="Rhea" id="RHEA:13065"/>
        <dbReference type="ChEBI" id="CHEBI:15377"/>
        <dbReference type="ChEBI" id="CHEBI:15378"/>
        <dbReference type="ChEBI" id="CHEBI:30616"/>
        <dbReference type="ChEBI" id="CHEBI:43474"/>
        <dbReference type="ChEBI" id="CHEBI:456216"/>
        <dbReference type="EC" id="5.6.2.4"/>
    </reaction>
</comment>
<comment type="subunit">
    <text evidence="1">Homodimer.</text>
</comment>
<comment type="similarity">
    <text evidence="1">Belongs to the helicase family. UvrD subfamily.</text>
</comment>
<sequence length="645" mass="75814">MSLNFSQKNAVELTNGPCLILAGAGSGKTKVIINKIIYLINHCQYEPDNIAAVTFTNKAAYEMRIRLSKYLNIPEIKKIIISTFHSLGLEIIKKEIDALELNNNFTLLDEKDQILLLKKICKKEIKNNIQLLKKLNFMISYWKNKFLTPLQVQLLAKSSQEKDFAYVYEQYTNYLYKANILDFDDLICMPTLLLKNNKKIKIRWQKKISYLLVDEYQDTNNSQYELIKMLANKNSDFTLVGDDDQSIYSWRGANPQNIFLLKKDFPNLKIIKMEHNYRSSGRILKAANSLIANNIHYLEKKLFSQLKYGNLIKVLIGKNEENEAQKIVKKIISQYAKKKIKYRDFAILYRGNYQSRILEKALIKENIPYNISEKSSFFSRPEIKDLLSYLRVVINRDDNHAFMRIVNIPSRQIGKTTLKKLEEWANKKHVSLFQASNNIEIKKFLNENTIKKIKNFISKIEKFTAWSCLKPSNIIDDIVDDLEYEKWLSKFLKDPNKIKNSINNVHTLSQWFKNMIKGDDFEKPMTLFQIVTRMTIRDILDDNIIKEQQDRVQLMTLHASKGLEFPAVFIIGMCEGILPNQKSIDNDNIEEERRLTYVGITRAKKQLFFTYCYKRTQYGQILDMLPSRFLFELPQEDLKWEKKIF</sequence>
<reference key="1">
    <citation type="journal article" date="2000" name="Nature">
        <title>Genome sequence of the endocellular bacterial symbiont of aphids Buchnera sp. APS.</title>
        <authorList>
            <person name="Shigenobu S."/>
            <person name="Watanabe H."/>
            <person name="Hattori M."/>
            <person name="Sakaki Y."/>
            <person name="Ishikawa H."/>
        </authorList>
    </citation>
    <scope>NUCLEOTIDE SEQUENCE [LARGE SCALE GENOMIC DNA]</scope>
    <source>
        <strain>APS</strain>
    </source>
</reference>